<evidence type="ECO:0000255" key="1"/>
<evidence type="ECO:0000255" key="2">
    <source>
        <dbReference type="PROSITE-ProRule" id="PRU00116"/>
    </source>
</evidence>
<evidence type="ECO:0000255" key="3">
    <source>
        <dbReference type="PROSITE-ProRule" id="PRU00286"/>
    </source>
</evidence>
<evidence type="ECO:0000256" key="4">
    <source>
        <dbReference type="SAM" id="MobiDB-lite"/>
    </source>
</evidence>
<evidence type="ECO:0000269" key="5">
    <source>
    </source>
</evidence>
<evidence type="ECO:0000303" key="6">
    <source>
    </source>
</evidence>
<evidence type="ECO:0000305" key="7"/>
<evidence type="ECO:0000312" key="8">
    <source>
        <dbReference type="EMBL" id="AFR95191.1"/>
    </source>
</evidence>
<evidence type="ECO:0000312" key="9">
    <source>
        <dbReference type="Proteomes" id="UP000010091"/>
    </source>
</evidence>
<proteinExistence type="evidence at protein level"/>
<organism evidence="9">
    <name type="scientific">Cryptococcus neoformans var. grubii serotype A (strain H99 / ATCC 208821 / CBS 10515 / FGSC 9487)</name>
    <name type="common">Filobasidiella neoformans var. grubii</name>
    <dbReference type="NCBI Taxonomy" id="235443"/>
    <lineage>
        <taxon>Eukaryota</taxon>
        <taxon>Fungi</taxon>
        <taxon>Dikarya</taxon>
        <taxon>Basidiomycota</taxon>
        <taxon>Agaricomycotina</taxon>
        <taxon>Tremellomycetes</taxon>
        <taxon>Tremellales</taxon>
        <taxon>Cryptococcaceae</taxon>
        <taxon>Cryptococcus</taxon>
        <taxon>Cryptococcus neoformans species complex</taxon>
    </lineage>
</organism>
<protein>
    <recommendedName>
        <fullName evidence="7">Mitochondrial respiration co-chaperone MRJ1</fullName>
    </recommendedName>
    <alternativeName>
        <fullName evidence="6">Mitochondrial respiration J-domain protein 1</fullName>
    </alternativeName>
</protein>
<feature type="transit peptide" description="Mitochondrion" evidence="1">
    <location>
        <begin position="1"/>
        <end position="36"/>
    </location>
</feature>
<feature type="chain" id="PRO_0000451743" description="Mitochondrial respiration co-chaperone MRJ1" evidence="1">
    <location>
        <begin position="37"/>
        <end position="331"/>
    </location>
</feature>
<feature type="domain" description="J" evidence="3">
    <location>
        <begin position="83"/>
        <end position="147"/>
    </location>
</feature>
<feature type="domain" description="IQ" evidence="2">
    <location>
        <begin position="275"/>
        <end position="303"/>
    </location>
</feature>
<feature type="region of interest" description="Disordered" evidence="4">
    <location>
        <begin position="35"/>
        <end position="66"/>
    </location>
</feature>
<feature type="region of interest" description="Disordered" evidence="4">
    <location>
        <begin position="203"/>
        <end position="226"/>
    </location>
</feature>
<feature type="compositionally biased region" description="Low complexity" evidence="4">
    <location>
        <begin position="40"/>
        <end position="53"/>
    </location>
</feature>
<feature type="mutagenesis site" description="Decreases cell population growth rate." evidence="5">
    <original>H</original>
    <variation>Q</variation>
    <location>
        <position position="111"/>
    </location>
</feature>
<comment type="function">
    <text evidence="5">Mitochondrial co-chaperone required for ubiquinol-cytochrome c oxidoreductase (mitochondrial respiratory chain complex III) activity.</text>
</comment>
<comment type="subunit">
    <text evidence="5">Interacts with QCR2.</text>
</comment>
<comment type="subcellular location">
    <subcellularLocation>
        <location evidence="5">Mitochondrion</location>
    </subcellularLocation>
</comment>
<comment type="induction">
    <text evidence="5">Induced by high temperature (at protein level).</text>
</comment>
<comment type="disruption phenotype">
    <text evidence="5">Decreases electron flow through the mitochondrial respiratory chain complex III (PubMed:32518190). Increases level of depolarized mitochondria (PubMed:32518190). Abnormal cell wall structure resulting in abnormal capsule attachment (PubMed:32518190). Sensitive to iron starvation (PubMed:32518190). Abolishes cell population growth on non-fermentable carbon sources (glycerol, lactate, and succinate) (PubMed:32518190). Decreases cell population growth (PubMed:32518190). Decreases virulence in a mouse intranasal model of infection (PubMed:32518190).</text>
</comment>
<comment type="similarity">
    <text evidence="7">Belongs to the DnaJ family.</text>
</comment>
<comment type="sequence caution" evidence="7">
    <conflict type="erroneous initiation">
        <sequence resource="EMBL-CDS" id="AFR95191"/>
    </conflict>
    <text>Truncated N-terminus.</text>
</comment>
<reference evidence="9" key="1">
    <citation type="journal article" date="2014" name="PLoS Genet.">
        <title>Analysis of the genome and transcriptome of Cryptococcus neoformans var. grubii reveals complex RNA expression and microevolution leading to virulence attenuation.</title>
        <authorList>
            <person name="Janbon G."/>
            <person name="Ormerod K.L."/>
            <person name="Paulet D."/>
            <person name="Byrnes E.J. III"/>
            <person name="Yadav V."/>
            <person name="Chatterjee G."/>
            <person name="Mullapudi N."/>
            <person name="Hon C.-C."/>
            <person name="Billmyre R.B."/>
            <person name="Brunel F."/>
            <person name="Bahn Y.-S."/>
            <person name="Chen W."/>
            <person name="Chen Y."/>
            <person name="Chow E.W.L."/>
            <person name="Coppee J.-Y."/>
            <person name="Floyd-Averette A."/>
            <person name="Gaillardin C."/>
            <person name="Gerik K.J."/>
            <person name="Goldberg J."/>
            <person name="Gonzalez-Hilarion S."/>
            <person name="Gujja S."/>
            <person name="Hamlin J.L."/>
            <person name="Hsueh Y.-P."/>
            <person name="Ianiri G."/>
            <person name="Jones S."/>
            <person name="Kodira C.D."/>
            <person name="Kozubowski L."/>
            <person name="Lam W."/>
            <person name="Marra M."/>
            <person name="Mesner L.D."/>
            <person name="Mieczkowski P.A."/>
            <person name="Moyrand F."/>
            <person name="Nielsen K."/>
            <person name="Proux C."/>
            <person name="Rossignol T."/>
            <person name="Schein J.E."/>
            <person name="Sun S."/>
            <person name="Wollschlaeger C."/>
            <person name="Wood I.A."/>
            <person name="Zeng Q."/>
            <person name="Neuveglise C."/>
            <person name="Newlon C.S."/>
            <person name="Perfect J.R."/>
            <person name="Lodge J.K."/>
            <person name="Idnurm A."/>
            <person name="Stajich J.E."/>
            <person name="Kronstad J.W."/>
            <person name="Sanyal K."/>
            <person name="Heitman J."/>
            <person name="Fraser J.A."/>
            <person name="Cuomo C.A."/>
            <person name="Dietrich F.S."/>
        </authorList>
    </citation>
    <scope>NUCLEOTIDE SEQUENCE [LARGE SCALE GENOMIC DNA]</scope>
    <source>
        <strain>H99 / ATCC 208821 / CBS 10515 / FGSC 9487</strain>
    </source>
</reference>
<reference evidence="7" key="2">
    <citation type="journal article" date="2020" name="MBio">
        <title>The Novel J-Domain Protein Mrj1 Is Required for Mitochondrial Respiration and Virulence in Cryptococcus neoformans.</title>
        <authorList>
            <person name="Horianopoulos L.C."/>
            <person name="Hu G."/>
            <person name="Caza M."/>
            <person name="Schmitt K."/>
            <person name="Overby P."/>
            <person name="Johnson J.D."/>
            <person name="Valerius O."/>
            <person name="Braus G.H."/>
            <person name="Kronstad J.W."/>
        </authorList>
    </citation>
    <scope>IDENTIFICATION OF N-TERMINUS</scope>
    <scope>FUNCTION</scope>
    <scope>INTERACTION WITH QCR2</scope>
    <scope>SUBCELLULAR LOCATION</scope>
    <scope>INDUCTION</scope>
    <scope>DISRUPTION PHENOTYPE</scope>
    <scope>MUTAGENESIS OF HIS-111</scope>
</reference>
<keyword id="KW-0143">Chaperone</keyword>
<keyword id="KW-0249">Electron transport</keyword>
<keyword id="KW-0496">Mitochondrion</keyword>
<keyword id="KW-0679">Respiratory chain</keyword>
<keyword id="KW-0809">Transit peptide</keyword>
<keyword id="KW-0813">Transport</keyword>
<accession>J9VP29</accession>
<dbReference type="EMBL" id="CP003824">
    <property type="protein sequence ID" value="AFR95191.1"/>
    <property type="status" value="ALT_INIT"/>
    <property type="molecule type" value="Genomic_DNA"/>
</dbReference>
<dbReference type="RefSeq" id="XP_012049209.1">
    <property type="nucleotide sequence ID" value="XM_012193819.1"/>
</dbReference>
<dbReference type="SMR" id="J9VP29"/>
<dbReference type="GeneID" id="23884705"/>
<dbReference type="KEGG" id="cng:CNAG_00938"/>
<dbReference type="VEuPathDB" id="FungiDB:CNAG_00938"/>
<dbReference type="HOGENOM" id="CLU_1133539_0_0_1"/>
<dbReference type="PHI-base" id="PHI:10399"/>
<dbReference type="Proteomes" id="UP000010091">
    <property type="component" value="Chromosome 5"/>
</dbReference>
<dbReference type="GO" id="GO:0005739">
    <property type="term" value="C:mitochondrion"/>
    <property type="evidence" value="ECO:0000314"/>
    <property type="project" value="UniProtKB"/>
</dbReference>
<dbReference type="GO" id="GO:0005634">
    <property type="term" value="C:nucleus"/>
    <property type="evidence" value="ECO:0007669"/>
    <property type="project" value="TreeGrafter"/>
</dbReference>
<dbReference type="GO" id="GO:0031072">
    <property type="term" value="F:heat shock protein binding"/>
    <property type="evidence" value="ECO:0007669"/>
    <property type="project" value="TreeGrafter"/>
</dbReference>
<dbReference type="GO" id="GO:0006122">
    <property type="term" value="P:mitochondrial electron transport, ubiquinol to cytochrome c"/>
    <property type="evidence" value="ECO:0000315"/>
    <property type="project" value="UniProtKB"/>
</dbReference>
<dbReference type="CDD" id="cd06257">
    <property type="entry name" value="DnaJ"/>
    <property type="match status" value="1"/>
</dbReference>
<dbReference type="FunFam" id="1.10.287.110:FF:000209">
    <property type="entry name" value="Expressed protein"/>
    <property type="match status" value="1"/>
</dbReference>
<dbReference type="Gene3D" id="1.10.287.110">
    <property type="entry name" value="DnaJ domain"/>
    <property type="match status" value="1"/>
</dbReference>
<dbReference type="InterPro" id="IPR001623">
    <property type="entry name" value="DnaJ_domain"/>
</dbReference>
<dbReference type="InterPro" id="IPR036869">
    <property type="entry name" value="J_dom_sf"/>
</dbReference>
<dbReference type="InterPro" id="IPR052594">
    <property type="entry name" value="J_domain-containing_protein"/>
</dbReference>
<dbReference type="PANTHER" id="PTHR44144">
    <property type="entry name" value="DNAJ HOMOLOG SUBFAMILY C MEMBER 9"/>
    <property type="match status" value="1"/>
</dbReference>
<dbReference type="PANTHER" id="PTHR44144:SF1">
    <property type="entry name" value="DNAJ HOMOLOG SUBFAMILY C MEMBER 9"/>
    <property type="match status" value="1"/>
</dbReference>
<dbReference type="Pfam" id="PF00226">
    <property type="entry name" value="DnaJ"/>
    <property type="match status" value="1"/>
</dbReference>
<dbReference type="PRINTS" id="PR00625">
    <property type="entry name" value="JDOMAIN"/>
</dbReference>
<dbReference type="SMART" id="SM00271">
    <property type="entry name" value="DnaJ"/>
    <property type="match status" value="1"/>
</dbReference>
<dbReference type="SUPFAM" id="SSF46565">
    <property type="entry name" value="Chaperone J-domain"/>
    <property type="match status" value="1"/>
</dbReference>
<dbReference type="PROSITE" id="PS50076">
    <property type="entry name" value="DNAJ_2"/>
    <property type="match status" value="1"/>
</dbReference>
<dbReference type="PROSITE" id="PS50096">
    <property type="entry name" value="IQ"/>
    <property type="match status" value="1"/>
</dbReference>
<gene>
    <name evidence="6" type="primary">MRJ1</name>
    <name evidence="8" type="ORF">CNAG_00938</name>
</gene>
<sequence>MLSFQATVRPLAVSSRLHSPAAHIWRRNAHTAAMSDDSLDQGSSSSYGDSASQPHLGKGKGRQDSLAQSYRFPEKGMNGGPPDPFEVMALDRSATQQEVKQQYYKLALLLHPDSSHPSSSPDHFATLNKAYNLLSKQSSRSAFLKTGYGWDVSTSSGGNQTWSDSLMRAEIARRRNGGAAAWNGASRRYRDSDAGRGAWGGFDGSQGWRPYEDPSKGFSPPTSGPAEERYMSNPRFLAVVGVASAVIAWVHWHRLGYAAETHRDMLDKQNIDASRALAQARYEAATHGHIRREQIRRRVREAEVLKELEKADQGHIAVAGPPTAYPPSHRE</sequence>
<name>MRJ1_CRYNH</name>